<evidence type="ECO:0000250" key="1"/>
<evidence type="ECO:0000269" key="2">
    <source>
    </source>
</evidence>
<evidence type="ECO:0000305" key="3"/>
<dbReference type="EC" id="1.1.1.301" evidence="2"/>
<dbReference type="EMBL" id="AY078980">
    <property type="protein sequence ID" value="AAL78068.1"/>
    <property type="molecule type" value="Genomic_DNA"/>
</dbReference>
<dbReference type="SMR" id="Q8KQL2"/>
<dbReference type="KEGG" id="ag:AAL78068"/>
<dbReference type="BioCyc" id="MetaCyc:MONOMER-15300"/>
<dbReference type="BRENDA" id="1.1.1.301">
    <property type="organism ID" value="8592"/>
</dbReference>
<dbReference type="GO" id="GO:0046872">
    <property type="term" value="F:metal ion binding"/>
    <property type="evidence" value="ECO:0000314"/>
    <property type="project" value="UniProtKB"/>
</dbReference>
<dbReference type="GO" id="GO:0003954">
    <property type="term" value="F:NADH dehydrogenase activity"/>
    <property type="evidence" value="ECO:0000314"/>
    <property type="project" value="UniProtKB"/>
</dbReference>
<dbReference type="GO" id="GO:0003959">
    <property type="term" value="F:NADPH dehydrogenase activity"/>
    <property type="evidence" value="ECO:0000314"/>
    <property type="project" value="UniProtKB"/>
</dbReference>
<dbReference type="GO" id="GO:0008270">
    <property type="term" value="F:zinc ion binding"/>
    <property type="evidence" value="ECO:0007669"/>
    <property type="project" value="InterPro"/>
</dbReference>
<dbReference type="GO" id="GO:0051157">
    <property type="term" value="P:arabitol catabolic process"/>
    <property type="evidence" value="ECO:0000315"/>
    <property type="project" value="UniProtKB"/>
</dbReference>
<dbReference type="CDD" id="cd08258">
    <property type="entry name" value="Zn_ADH4"/>
    <property type="match status" value="1"/>
</dbReference>
<dbReference type="Gene3D" id="3.90.180.10">
    <property type="entry name" value="Medium-chain alcohol dehydrogenases, catalytic domain"/>
    <property type="match status" value="1"/>
</dbReference>
<dbReference type="Gene3D" id="3.40.50.720">
    <property type="entry name" value="NAD(P)-binding Rossmann-like Domain"/>
    <property type="match status" value="1"/>
</dbReference>
<dbReference type="InterPro" id="IPR013149">
    <property type="entry name" value="ADH-like_C"/>
</dbReference>
<dbReference type="InterPro" id="IPR013154">
    <property type="entry name" value="ADH-like_N"/>
</dbReference>
<dbReference type="InterPro" id="IPR002328">
    <property type="entry name" value="ADH_Zn_CS"/>
</dbReference>
<dbReference type="InterPro" id="IPR011032">
    <property type="entry name" value="GroES-like_sf"/>
</dbReference>
<dbReference type="InterPro" id="IPR036291">
    <property type="entry name" value="NAD(P)-bd_dom_sf"/>
</dbReference>
<dbReference type="InterPro" id="IPR020843">
    <property type="entry name" value="PKS_ER"/>
</dbReference>
<dbReference type="InterPro" id="IPR050129">
    <property type="entry name" value="Zn_alcohol_dh"/>
</dbReference>
<dbReference type="PANTHER" id="PTHR43401">
    <property type="entry name" value="L-THREONINE 3-DEHYDROGENASE"/>
    <property type="match status" value="1"/>
</dbReference>
<dbReference type="PANTHER" id="PTHR43401:SF2">
    <property type="entry name" value="L-THREONINE 3-DEHYDROGENASE"/>
    <property type="match status" value="1"/>
</dbReference>
<dbReference type="Pfam" id="PF08240">
    <property type="entry name" value="ADH_N"/>
    <property type="match status" value="1"/>
</dbReference>
<dbReference type="Pfam" id="PF00107">
    <property type="entry name" value="ADH_zinc_N"/>
    <property type="match status" value="1"/>
</dbReference>
<dbReference type="SMART" id="SM00829">
    <property type="entry name" value="PKS_ER"/>
    <property type="match status" value="1"/>
</dbReference>
<dbReference type="SUPFAM" id="SSF50129">
    <property type="entry name" value="GroES-like"/>
    <property type="match status" value="1"/>
</dbReference>
<dbReference type="SUPFAM" id="SSF51735">
    <property type="entry name" value="NAD(P)-binding Rossmann-fold domains"/>
    <property type="match status" value="1"/>
</dbReference>
<dbReference type="PROSITE" id="PS00059">
    <property type="entry name" value="ADH_ZINC"/>
    <property type="match status" value="1"/>
</dbReference>
<feature type="chain" id="PRO_0000418980" description="D-arabitol-phosphate dehydrogenase">
    <location>
        <begin position="1"/>
        <end position="352"/>
    </location>
</feature>
<feature type="binding site" evidence="1">
    <location>
        <position position="43"/>
    </location>
    <ligand>
        <name>Mn(2+)</name>
        <dbReference type="ChEBI" id="CHEBI:29035"/>
        <label>1</label>
        <note>catalytic</note>
    </ligand>
</feature>
<feature type="binding site" evidence="1">
    <location>
        <position position="65"/>
    </location>
    <ligand>
        <name>Mn(2+)</name>
        <dbReference type="ChEBI" id="CHEBI:29035"/>
        <label>1</label>
        <note>catalytic</note>
    </ligand>
</feature>
<feature type="binding site" evidence="1">
    <location>
        <position position="96"/>
    </location>
    <ligand>
        <name>Mn(2+)</name>
        <dbReference type="ChEBI" id="CHEBI:29035"/>
        <label>2</label>
    </ligand>
</feature>
<feature type="binding site" evidence="1">
    <location>
        <position position="99"/>
    </location>
    <ligand>
        <name>Mn(2+)</name>
        <dbReference type="ChEBI" id="CHEBI:29035"/>
        <label>2</label>
    </ligand>
</feature>
<feature type="binding site" evidence="1">
    <location>
        <position position="102"/>
    </location>
    <ligand>
        <name>Mn(2+)</name>
        <dbReference type="ChEBI" id="CHEBI:29035"/>
        <label>2</label>
    </ligand>
</feature>
<feature type="binding site" evidence="1">
    <location>
        <position position="110"/>
    </location>
    <ligand>
        <name>Mn(2+)</name>
        <dbReference type="ChEBI" id="CHEBI:29035"/>
        <label>2</label>
    </ligand>
</feature>
<feature type="binding site" evidence="1">
    <location>
        <position position="151"/>
    </location>
    <ligand>
        <name>Mn(2+)</name>
        <dbReference type="ChEBI" id="CHEBI:29035"/>
        <label>1</label>
        <note>catalytic</note>
    </ligand>
</feature>
<accession>Q8KQL2</accession>
<reference key="1">
    <citation type="journal article" date="2003" name="Biochem. J.">
        <title>Biochemical and genetic characterization of a novel enzyme of pentitol metabolism: D-arabitol-phosphate dehydrogenase.</title>
        <authorList>
            <person name="Povelainen M."/>
            <person name="Eneyskaya E.V."/>
            <person name="Kulminskaya A.A."/>
            <person name="Ivanen D.R."/>
            <person name="Kalkkinen N."/>
            <person name="Neustroev K.N."/>
            <person name="Miasnikov A.N."/>
        </authorList>
    </citation>
    <scope>NUCLEOTIDE SEQUENCE [GENOMIC DNA]</scope>
    <scope>FUNCTION AS A DEHYDROGENASE</scope>
    <scope>CATALYTIC ACTIVITY</scope>
    <scope>BIOPHYSICOCHEMICAL PROPERTIES</scope>
    <scope>SUBSTRATE SPECIFICITY</scope>
    <scope>COFACTOR</scope>
    <scope>ACTIVITY REGULATION</scope>
    <scope>SUBUNIT</scope>
    <source>
        <strain>ATCC 35665 / DSM 20063 / R 6566</strain>
    </source>
</reference>
<comment type="function">
    <text evidence="2">Involved in the arabitol catabolism via the arabitol phosphate route. Catalyzes only the transformation of D-arabitol 1-phosphate (Arb1P) and D-arabitol 5-phosphate (Arb5P) into D-xylulose 5-phosphate (Xlu5P) and ribulose 5-phosphate, respectively. It can use both NAD and NADP.</text>
</comment>
<comment type="catalytic activity">
    <reaction evidence="2">
        <text>D-arabinitol 1-phosphate + NAD(+) = D-xylulose 5-phosphate + NADH + H(+)</text>
        <dbReference type="Rhea" id="RHEA:26002"/>
        <dbReference type="ChEBI" id="CHEBI:15378"/>
        <dbReference type="ChEBI" id="CHEBI:57540"/>
        <dbReference type="ChEBI" id="CHEBI:57737"/>
        <dbReference type="ChEBI" id="CHEBI:57945"/>
        <dbReference type="ChEBI" id="CHEBI:58566"/>
        <dbReference type="EC" id="1.1.1.301"/>
    </reaction>
</comment>
<comment type="cofactor">
    <cofactor evidence="2">
        <name>Mn(2+)</name>
        <dbReference type="ChEBI" id="CHEBI:29035"/>
    </cofactor>
    <text evidence="2">Binds 2 manganese ions per subunit.</text>
</comment>
<comment type="activity regulation">
    <text evidence="2">Inhibited by EDTA, 4-hydroxymercuribenzoic acid (PHMB), mercury and zinc ions at a concentration of 2 mM.</text>
</comment>
<comment type="biophysicochemical properties">
    <kinetics>
        <KM evidence="2">0.23 mM for Xlu5P (with NAD at 20 degrees Celsius and at pH 7.2)</KM>
        <KM evidence="2">0.63 mM for Arb5P (with NAD at 20 degrees Celsius and at pH 7.2)</KM>
        <KM evidence="2">0.65 mM for Xlu5P (with NADP at 20 degrees Celsius and at pH 7.2)</KM>
        <KM evidence="2">2.9 mM for Arb1P (with NAD at 20 degrees Celsius and at pH 7.2)</KM>
        <KM evidence="2">3.6 mM for Arb1P (with NADP at 20 degrees Celsius and at pH 7.2)</KM>
        <Vmax evidence="2">0.09 umol/min/mg enzyme with Arb1P as substrate (with NADP at 20 degrees Celsius and at pH 7.2)</Vmax>
        <Vmax evidence="2">0.15 umol/min/mg enzyme with Arb5P as substrate (with NAD at 20 degrees Celsius and at pH 7.2)</Vmax>
        <Vmax evidence="2">1.2 umol/min/mg enzyme with Arb1P as substrate (with NAD at 20 degrees Celsius and at pH 7.2)</Vmax>
        <Vmax evidence="2">1.2 umol/min/mg enzyme with Xlu5P as substrate (with NADP at 20 degrees Celsius and at pH 7.2)</Vmax>
        <Vmax evidence="2">14.0 umol/min/mg enzyme with Xlu5P as substrate (with NAD at 20 degrees Celsius and at pH 7.2)</Vmax>
    </kinetics>
    <phDependence>
        <text evidence="2">Optimum pH is 6.8-7.3 in the reductive reaction and pH 8.3-8.6 in the oxidative reaction.</text>
    </phDependence>
</comment>
<comment type="subunit">
    <text evidence="2">Homotetramer.</text>
</comment>
<comment type="similarity">
    <text evidence="3">Belongs to the zinc-containing alcohol dehydrogenase family.</text>
</comment>
<proteinExistence type="evidence at protein level"/>
<sequence length="352" mass="38828">MSKTMKGVSKQAPGYDQMAFIDLSVPEATDDKVLIKVAYTGICGSDIHTFKGEYKNPTTPVVLGHEFSGQVVEVGANVPKVKVGDRVTSETTFYVCGECDYCKEKQYNLCPHRKGIGTQQNGSMANYVLAREESIHLLPDHLSYEGAAMSEPLACCVHAMYQKSHLELKDTIIIMGPGPIGLYLLQIAKEIGAFVIMTGITKDAHRLALAKKLGADVIVDTMKEDLAKVVNEITDGYGVDKVYDASGAVPAVNASLPLIRKQGQFIQVGLFANKMVDLDTESIIQREIEYIGSRSQNPYDWPIAIHLLAKGAINIDEMITKKYPLTEWREAFDKVMEGNEIKVMIESNPEEF</sequence>
<organism>
    <name type="scientific">Enterococcus avium</name>
    <name type="common">Streptococcus avium</name>
    <dbReference type="NCBI Taxonomy" id="33945"/>
    <lineage>
        <taxon>Bacteria</taxon>
        <taxon>Bacillati</taxon>
        <taxon>Bacillota</taxon>
        <taxon>Bacilli</taxon>
        <taxon>Lactobacillales</taxon>
        <taxon>Enterococcaceae</taxon>
        <taxon>Enterococcus</taxon>
    </lineage>
</organism>
<protein>
    <recommendedName>
        <fullName>D-arabitol-phosphate dehydrogenase</fullName>
        <shortName>APDH</shortName>
        <ecNumber evidence="2">1.1.1.301</ecNumber>
    </recommendedName>
</protein>
<keyword id="KW-0464">Manganese</keyword>
<keyword id="KW-0479">Metal-binding</keyword>
<keyword id="KW-0520">NAD</keyword>
<keyword id="KW-0521">NADP</keyword>
<keyword id="KW-0560">Oxidoreductase</keyword>
<keyword id="KW-0862">Zinc</keyword>
<name>ARPD_ENTAV</name>